<protein>
    <recommendedName>
        <fullName evidence="1">tRNA N6-adenosine threonylcarbamoyltransferase</fullName>
        <ecNumber evidence="1">2.3.1.234</ecNumber>
    </recommendedName>
    <alternativeName>
        <fullName>N6-L-threonylcarbamoyladenine synthase</fullName>
        <shortName>t(6)A synthase</shortName>
    </alternativeName>
    <alternativeName>
        <fullName evidence="1">t(6)A37 threonylcarbamoyladenosine biosynthesis protein KAE1</fullName>
    </alternativeName>
    <alternativeName>
        <fullName evidence="1">tRNA threonylcarbamoyladenosine biosynthesis protein KAE1</fullName>
    </alternativeName>
</protein>
<gene>
    <name evidence="1" type="primary">KAE1</name>
    <name type="ordered locus">CNBA3260</name>
</gene>
<proteinExistence type="inferred from homology"/>
<organism>
    <name type="scientific">Cryptococcus neoformans var. neoformans serotype D (strain B-3501A)</name>
    <name type="common">Filobasidiella neoformans</name>
    <dbReference type="NCBI Taxonomy" id="283643"/>
    <lineage>
        <taxon>Eukaryota</taxon>
        <taxon>Fungi</taxon>
        <taxon>Dikarya</taxon>
        <taxon>Basidiomycota</taxon>
        <taxon>Agaricomycotina</taxon>
        <taxon>Tremellomycetes</taxon>
        <taxon>Tremellales</taxon>
        <taxon>Cryptococcaceae</taxon>
        <taxon>Cryptococcus</taxon>
        <taxon>Cryptococcus neoformans species complex</taxon>
    </lineage>
</organism>
<name>KAE1_CRYNB</name>
<comment type="function">
    <text evidence="1">Component of the EKC/KEOPS complex that is required for the formation of a threonylcarbamoyl group on adenosine at position 37 (t(6)A37) in tRNAs that read codons beginning with adenine. The complex is probably involved in the transfer of the threonylcarbamoyl moiety of threonylcarbamoyl-AMP (TC-AMP) to the N6 group of A37. KAE1 likely plays a direct catalytic role in this reaction, but requires other protein(s) of the complex to fulfill this activity. The EKC/KEOPS complex also promotes both telomere uncapping and telomere elongation. The complex is required for efficient recruitment of transcriptional coactivators.</text>
</comment>
<comment type="catalytic activity">
    <reaction evidence="1">
        <text>L-threonylcarbamoyladenylate + adenosine(37) in tRNA = N(6)-L-threonylcarbamoyladenosine(37) in tRNA + AMP + H(+)</text>
        <dbReference type="Rhea" id="RHEA:37059"/>
        <dbReference type="Rhea" id="RHEA-COMP:10162"/>
        <dbReference type="Rhea" id="RHEA-COMP:10163"/>
        <dbReference type="ChEBI" id="CHEBI:15378"/>
        <dbReference type="ChEBI" id="CHEBI:73682"/>
        <dbReference type="ChEBI" id="CHEBI:74411"/>
        <dbReference type="ChEBI" id="CHEBI:74418"/>
        <dbReference type="ChEBI" id="CHEBI:456215"/>
        <dbReference type="EC" id="2.3.1.234"/>
    </reaction>
</comment>
<comment type="cofactor">
    <cofactor evidence="1">
        <name>a divalent metal cation</name>
        <dbReference type="ChEBI" id="CHEBI:60240"/>
    </cofactor>
    <text evidence="1">Binds 1 divalent metal cation per subunit.</text>
</comment>
<comment type="subunit">
    <text evidence="1">Component of the EKC/KEOPS complex composed of at least BUD32, CGI121, GON7, KAE1 and PCC1; the whole complex dimerizes.</text>
</comment>
<comment type="subcellular location">
    <subcellularLocation>
        <location evidence="1">Cytoplasm</location>
    </subcellularLocation>
    <subcellularLocation>
        <location evidence="1">Nucleus</location>
    </subcellularLocation>
</comment>
<comment type="similarity">
    <text evidence="1">Belongs to the KAE1 / TsaD family.</text>
</comment>
<sequence>MLVLLIVFFNSYYTHCSHHSLYSFHCTPPDPAMKQSPLHRPSRPLLALGIEGSANKLGCGIISHSPSPTGGPTLVMVLSNVRHTYITPPGEGFLPSDTARHHREWVVKVIEEAVRKAGVRMGDLDCIAFTKGPGMGTPLQVGALVARTLSLLHNIPLVGVNHCVGHIEMGRQITSSHNPIVLYVSGGNTQVIAYSQQRYRIFGETLDIAIGNCLDRFARVIGLRNDPSPGYNIEKEAKKGKRLVQLPYGTKGMDVSLAGILHSVEAYTKDKRYRSWDQVNDVEEDIITPYDLCFSLQETTFAMLVEITERAMAHVGAKDVLIVGGVGCNLRLQEMMGIMASERGGRVFATDESFCIDNGIMIAQAGLLAFRMGNTMPLEKTGVTQRYRTDAVHVAWRA</sequence>
<dbReference type="EC" id="2.3.1.234" evidence="1"/>
<dbReference type="EMBL" id="AAEY01000001">
    <property type="protein sequence ID" value="EAL23679.1"/>
    <property type="molecule type" value="Genomic_DNA"/>
</dbReference>
<dbReference type="RefSeq" id="XP_778326.1">
    <property type="nucleotide sequence ID" value="XM_773233.1"/>
</dbReference>
<dbReference type="SMR" id="P0CQ15"/>
<dbReference type="EnsemblFungi" id="AAW40851">
    <property type="protein sequence ID" value="AAW40851"/>
    <property type="gene ID" value="CNA03390"/>
</dbReference>
<dbReference type="GeneID" id="4933584"/>
<dbReference type="KEGG" id="cnb:CNBA3260"/>
<dbReference type="VEuPathDB" id="FungiDB:CNBA3260"/>
<dbReference type="HOGENOM" id="CLU_023208_2_2_1"/>
<dbReference type="OrthoDB" id="572at5206"/>
<dbReference type="GO" id="GO:0000785">
    <property type="term" value="C:chromatin"/>
    <property type="evidence" value="ECO:0007669"/>
    <property type="project" value="EnsemblFungi"/>
</dbReference>
<dbReference type="GO" id="GO:0005737">
    <property type="term" value="C:cytoplasm"/>
    <property type="evidence" value="ECO:0007669"/>
    <property type="project" value="UniProtKB-SubCell"/>
</dbReference>
<dbReference type="GO" id="GO:0000408">
    <property type="term" value="C:EKC/KEOPS complex"/>
    <property type="evidence" value="ECO:0007669"/>
    <property type="project" value="EnsemblFungi"/>
</dbReference>
<dbReference type="GO" id="GO:0005634">
    <property type="term" value="C:nucleus"/>
    <property type="evidence" value="ECO:0007669"/>
    <property type="project" value="UniProtKB-SubCell"/>
</dbReference>
<dbReference type="GO" id="GO:0031490">
    <property type="term" value="F:chromatin DNA binding"/>
    <property type="evidence" value="ECO:0007669"/>
    <property type="project" value="EnsemblFungi"/>
</dbReference>
<dbReference type="GO" id="GO:0046872">
    <property type="term" value="F:metal ion binding"/>
    <property type="evidence" value="ECO:0007669"/>
    <property type="project" value="UniProtKB-KW"/>
</dbReference>
<dbReference type="GO" id="GO:0061711">
    <property type="term" value="F:N(6)-L-threonylcarbamoyladenine synthase activity"/>
    <property type="evidence" value="ECO:0007669"/>
    <property type="project" value="UniProtKB-EC"/>
</dbReference>
<dbReference type="GO" id="GO:0008252">
    <property type="term" value="F:nucleotidase activity"/>
    <property type="evidence" value="ECO:0007669"/>
    <property type="project" value="EnsemblFungi"/>
</dbReference>
<dbReference type="GO" id="GO:0045944">
    <property type="term" value="P:positive regulation of transcription by RNA polymerase II"/>
    <property type="evidence" value="ECO:0007669"/>
    <property type="project" value="EnsemblFungi"/>
</dbReference>
<dbReference type="GO" id="GO:0000722">
    <property type="term" value="P:telomere maintenance via recombination"/>
    <property type="evidence" value="ECO:0007669"/>
    <property type="project" value="EnsemblFungi"/>
</dbReference>
<dbReference type="GO" id="GO:0002949">
    <property type="term" value="P:tRNA threonylcarbamoyladenosine modification"/>
    <property type="evidence" value="ECO:0007669"/>
    <property type="project" value="UniProtKB-UniRule"/>
</dbReference>
<dbReference type="CDD" id="cd24132">
    <property type="entry name" value="ASKHA_NBD_OSGEP_like_euk"/>
    <property type="match status" value="1"/>
</dbReference>
<dbReference type="FunFam" id="3.30.420.40:FF:000141">
    <property type="entry name" value="Probable tRNA N6-adenosine threonylcarbamoyltransferase"/>
    <property type="match status" value="1"/>
</dbReference>
<dbReference type="FunFam" id="3.30.420.40:FF:000295">
    <property type="entry name" value="Probable tRNA N6-adenosine threonylcarbamoyltransferase"/>
    <property type="match status" value="1"/>
</dbReference>
<dbReference type="Gene3D" id="3.30.420.40">
    <property type="match status" value="2"/>
</dbReference>
<dbReference type="HAMAP" id="MF_01446">
    <property type="entry name" value="Kae1"/>
    <property type="match status" value="1"/>
</dbReference>
<dbReference type="InterPro" id="IPR043129">
    <property type="entry name" value="ATPase_NBD"/>
</dbReference>
<dbReference type="InterPro" id="IPR000905">
    <property type="entry name" value="Gcp-like_dom"/>
</dbReference>
<dbReference type="InterPro" id="IPR017861">
    <property type="entry name" value="KAE1/TsaD"/>
</dbReference>
<dbReference type="InterPro" id="IPR034680">
    <property type="entry name" value="Kae1_archaea_euk"/>
</dbReference>
<dbReference type="InterPro" id="IPR017860">
    <property type="entry name" value="Peptidase_M22_CS"/>
</dbReference>
<dbReference type="NCBIfam" id="TIGR03722">
    <property type="entry name" value="arch_KAE1"/>
    <property type="match status" value="1"/>
</dbReference>
<dbReference type="NCBIfam" id="TIGR00329">
    <property type="entry name" value="gcp_kae1"/>
    <property type="match status" value="1"/>
</dbReference>
<dbReference type="PANTHER" id="PTHR11735">
    <property type="entry name" value="TRNA N6-ADENOSINE THREONYLCARBAMOYLTRANSFERASE"/>
    <property type="match status" value="1"/>
</dbReference>
<dbReference type="PANTHER" id="PTHR11735:SF14">
    <property type="entry name" value="TRNA N6-ADENOSINE THREONYLCARBAMOYLTRANSFERASE"/>
    <property type="match status" value="1"/>
</dbReference>
<dbReference type="Pfam" id="PF00814">
    <property type="entry name" value="TsaD"/>
    <property type="match status" value="1"/>
</dbReference>
<dbReference type="PRINTS" id="PR00789">
    <property type="entry name" value="OSIALOPTASE"/>
</dbReference>
<dbReference type="SUPFAM" id="SSF53067">
    <property type="entry name" value="Actin-like ATPase domain"/>
    <property type="match status" value="2"/>
</dbReference>
<dbReference type="PROSITE" id="PS01016">
    <property type="entry name" value="GLYCOPROTEASE"/>
    <property type="match status" value="1"/>
</dbReference>
<accession>P0CQ15</accession>
<accession>Q560B4</accession>
<accession>Q5KPB7</accession>
<feature type="chain" id="PRO_0000410217" description="tRNA N6-adenosine threonylcarbamoyltransferase">
    <location>
        <begin position="1"/>
        <end position="398"/>
    </location>
</feature>
<feature type="binding site" evidence="1">
    <location>
        <position position="162"/>
    </location>
    <ligand>
        <name>a divalent metal cation</name>
        <dbReference type="ChEBI" id="CHEBI:60240"/>
    </ligand>
</feature>
<feature type="binding site" evidence="1">
    <location>
        <position position="166"/>
    </location>
    <ligand>
        <name>a divalent metal cation</name>
        <dbReference type="ChEBI" id="CHEBI:60240"/>
    </ligand>
</feature>
<feature type="binding site" evidence="1">
    <location>
        <begin position="183"/>
        <end position="187"/>
    </location>
    <ligand>
        <name>substrate</name>
    </ligand>
</feature>
<feature type="binding site" evidence="1">
    <location>
        <position position="183"/>
    </location>
    <ligand>
        <name>a divalent metal cation</name>
        <dbReference type="ChEBI" id="CHEBI:60240"/>
    </ligand>
</feature>
<feature type="binding site" evidence="1">
    <location>
        <position position="215"/>
    </location>
    <ligand>
        <name>substrate</name>
    </ligand>
</feature>
<feature type="binding site" evidence="1">
    <location>
        <position position="230"/>
    </location>
    <ligand>
        <name>substrate</name>
    </ligand>
</feature>
<feature type="binding site" evidence="1">
    <location>
        <position position="234"/>
    </location>
    <ligand>
        <name>substrate</name>
    </ligand>
</feature>
<feature type="binding site" evidence="1">
    <location>
        <position position="329"/>
    </location>
    <ligand>
        <name>substrate</name>
    </ligand>
</feature>
<feature type="binding site" evidence="1">
    <location>
        <position position="357"/>
    </location>
    <ligand>
        <name>a divalent metal cation</name>
        <dbReference type="ChEBI" id="CHEBI:60240"/>
    </ligand>
</feature>
<evidence type="ECO:0000255" key="1">
    <source>
        <dbReference type="HAMAP-Rule" id="MF_03180"/>
    </source>
</evidence>
<keyword id="KW-0010">Activator</keyword>
<keyword id="KW-0012">Acyltransferase</keyword>
<keyword id="KW-0963">Cytoplasm</keyword>
<keyword id="KW-0479">Metal-binding</keyword>
<keyword id="KW-0539">Nucleus</keyword>
<keyword id="KW-0804">Transcription</keyword>
<keyword id="KW-0805">Transcription regulation</keyword>
<keyword id="KW-0808">Transferase</keyword>
<keyword id="KW-0819">tRNA processing</keyword>
<reference key="1">
    <citation type="journal article" date="2005" name="Science">
        <title>The genome of the basidiomycetous yeast and human pathogen Cryptococcus neoformans.</title>
        <authorList>
            <person name="Loftus B.J."/>
            <person name="Fung E."/>
            <person name="Roncaglia P."/>
            <person name="Rowley D."/>
            <person name="Amedeo P."/>
            <person name="Bruno D."/>
            <person name="Vamathevan J."/>
            <person name="Miranda M."/>
            <person name="Anderson I.J."/>
            <person name="Fraser J.A."/>
            <person name="Allen J.E."/>
            <person name="Bosdet I.E."/>
            <person name="Brent M.R."/>
            <person name="Chiu R."/>
            <person name="Doering T.L."/>
            <person name="Donlin M.J."/>
            <person name="D'Souza C.A."/>
            <person name="Fox D.S."/>
            <person name="Grinberg V."/>
            <person name="Fu J."/>
            <person name="Fukushima M."/>
            <person name="Haas B.J."/>
            <person name="Huang J.C."/>
            <person name="Janbon G."/>
            <person name="Jones S.J.M."/>
            <person name="Koo H.L."/>
            <person name="Krzywinski M.I."/>
            <person name="Kwon-Chung K.J."/>
            <person name="Lengeler K.B."/>
            <person name="Maiti R."/>
            <person name="Marra M.A."/>
            <person name="Marra R.E."/>
            <person name="Mathewson C.A."/>
            <person name="Mitchell T.G."/>
            <person name="Pertea M."/>
            <person name="Riggs F.R."/>
            <person name="Salzberg S.L."/>
            <person name="Schein J.E."/>
            <person name="Shvartsbeyn A."/>
            <person name="Shin H."/>
            <person name="Shumway M."/>
            <person name="Specht C.A."/>
            <person name="Suh B.B."/>
            <person name="Tenney A."/>
            <person name="Utterback T.R."/>
            <person name="Wickes B.L."/>
            <person name="Wortman J.R."/>
            <person name="Wye N.H."/>
            <person name="Kronstad J.W."/>
            <person name="Lodge J.K."/>
            <person name="Heitman J."/>
            <person name="Davis R.W."/>
            <person name="Fraser C.M."/>
            <person name="Hyman R.W."/>
        </authorList>
    </citation>
    <scope>NUCLEOTIDE SEQUENCE [LARGE SCALE GENOMIC DNA]</scope>
    <source>
        <strain>B-3501A</strain>
    </source>
</reference>